<comment type="function">
    <text evidence="1">Catalyzes the exchange of L-carnitine for gamma-butyrobetaine.</text>
</comment>
<comment type="catalytic activity">
    <reaction evidence="1">
        <text>4-(trimethylamino)butanoate(in) + (R)-carnitine(out) = 4-(trimethylamino)butanoate(out) + (R)-carnitine(in)</text>
        <dbReference type="Rhea" id="RHEA:29427"/>
        <dbReference type="ChEBI" id="CHEBI:16244"/>
        <dbReference type="ChEBI" id="CHEBI:16347"/>
    </reaction>
</comment>
<comment type="pathway">
    <text evidence="1">Amine and polyamine metabolism; carnitine metabolism.</text>
</comment>
<comment type="subunit">
    <text evidence="1">Homotrimer.</text>
</comment>
<comment type="subcellular location">
    <subcellularLocation>
        <location evidence="1">Cell inner membrane</location>
        <topology evidence="1">Multi-pass membrane protein</topology>
    </subcellularLocation>
</comment>
<comment type="similarity">
    <text evidence="1">Belongs to the BCCT transporter (TC 2.A.15) family. CaiT subfamily.</text>
</comment>
<protein>
    <recommendedName>
        <fullName evidence="1">L-carnitine/gamma-butyrobetaine antiporter</fullName>
    </recommendedName>
</protein>
<evidence type="ECO:0000255" key="1">
    <source>
        <dbReference type="HAMAP-Rule" id="MF_01049"/>
    </source>
</evidence>
<reference key="1">
    <citation type="journal article" date="2008" name="J. Bacteriol.">
        <title>The pangenome structure of Escherichia coli: comparative genomic analysis of E. coli commensal and pathogenic isolates.</title>
        <authorList>
            <person name="Rasko D.A."/>
            <person name="Rosovitz M.J."/>
            <person name="Myers G.S.A."/>
            <person name="Mongodin E.F."/>
            <person name="Fricke W.F."/>
            <person name="Gajer P."/>
            <person name="Crabtree J."/>
            <person name="Sebaihia M."/>
            <person name="Thomson N.R."/>
            <person name="Chaudhuri R."/>
            <person name="Henderson I.R."/>
            <person name="Sperandio V."/>
            <person name="Ravel J."/>
        </authorList>
    </citation>
    <scope>NUCLEOTIDE SEQUENCE [LARGE SCALE GENOMIC DNA]</scope>
    <source>
        <strain>E24377A / ETEC</strain>
    </source>
</reference>
<proteinExistence type="inferred from homology"/>
<name>CAIT_ECO24</name>
<gene>
    <name evidence="1" type="primary">caiT</name>
    <name type="ordered locus">EcE24377A_0042</name>
</gene>
<keyword id="KW-0050">Antiport</keyword>
<keyword id="KW-0997">Cell inner membrane</keyword>
<keyword id="KW-1003">Cell membrane</keyword>
<keyword id="KW-0472">Membrane</keyword>
<keyword id="KW-1185">Reference proteome</keyword>
<keyword id="KW-0812">Transmembrane</keyword>
<keyword id="KW-1133">Transmembrane helix</keyword>
<keyword id="KW-0813">Transport</keyword>
<accession>A7ZHD1</accession>
<feature type="chain" id="PRO_1000064328" description="L-carnitine/gamma-butyrobetaine antiporter">
    <location>
        <begin position="1"/>
        <end position="504"/>
    </location>
</feature>
<feature type="transmembrane region" description="Helical" evidence="1">
    <location>
        <begin position="10"/>
        <end position="30"/>
    </location>
</feature>
<feature type="transmembrane region" description="Helical" evidence="1">
    <location>
        <begin position="51"/>
        <end position="71"/>
    </location>
</feature>
<feature type="transmembrane region" description="Helical" evidence="1">
    <location>
        <begin position="92"/>
        <end position="112"/>
    </location>
</feature>
<feature type="transmembrane region" description="Helical" evidence="1">
    <location>
        <begin position="143"/>
        <end position="163"/>
    </location>
</feature>
<feature type="transmembrane region" description="Helical" evidence="1">
    <location>
        <begin position="195"/>
        <end position="215"/>
    </location>
</feature>
<feature type="transmembrane region" description="Helical" evidence="1">
    <location>
        <begin position="231"/>
        <end position="251"/>
    </location>
</feature>
<feature type="transmembrane region" description="Helical" evidence="1">
    <location>
        <begin position="263"/>
        <end position="283"/>
    </location>
</feature>
<feature type="transmembrane region" description="Helical" evidence="1">
    <location>
        <begin position="316"/>
        <end position="336"/>
    </location>
</feature>
<feature type="transmembrane region" description="Helical" evidence="1">
    <location>
        <begin position="347"/>
        <end position="367"/>
    </location>
</feature>
<feature type="transmembrane region" description="Helical" evidence="1">
    <location>
        <begin position="398"/>
        <end position="418"/>
    </location>
</feature>
<feature type="transmembrane region" description="Helical" evidence="1">
    <location>
        <begin position="446"/>
        <end position="466"/>
    </location>
</feature>
<feature type="transmembrane region" description="Helical" evidence="1">
    <location>
        <begin position="475"/>
        <end position="495"/>
    </location>
</feature>
<dbReference type="EMBL" id="CP000800">
    <property type="protein sequence ID" value="ABV19566.1"/>
    <property type="molecule type" value="Genomic_DNA"/>
</dbReference>
<dbReference type="RefSeq" id="WP_000787103.1">
    <property type="nucleotide sequence ID" value="NC_009801.1"/>
</dbReference>
<dbReference type="SMR" id="A7ZHD1"/>
<dbReference type="GeneID" id="93777395"/>
<dbReference type="KEGG" id="ecw:EcE24377A_0042"/>
<dbReference type="HOGENOM" id="CLU_010118_6_0_6"/>
<dbReference type="UniPathway" id="UPA00117"/>
<dbReference type="Proteomes" id="UP000001122">
    <property type="component" value="Chromosome"/>
</dbReference>
<dbReference type="GO" id="GO:0005886">
    <property type="term" value="C:plasma membrane"/>
    <property type="evidence" value="ECO:0007669"/>
    <property type="project" value="UniProtKB-SubCell"/>
</dbReference>
<dbReference type="GO" id="GO:0044667">
    <property type="term" value="F:(R)-carnitine:4-(trimethylammonio)butanoate antiporter activity"/>
    <property type="evidence" value="ECO:0007669"/>
    <property type="project" value="UniProtKB-UniRule"/>
</dbReference>
<dbReference type="GO" id="GO:1900751">
    <property type="term" value="P:4-(trimethylammonio)butanoate transport"/>
    <property type="evidence" value="ECO:0007669"/>
    <property type="project" value="InterPro"/>
</dbReference>
<dbReference type="GO" id="GO:0009437">
    <property type="term" value="P:carnitine metabolic process"/>
    <property type="evidence" value="ECO:0007669"/>
    <property type="project" value="UniProtKB-UniRule"/>
</dbReference>
<dbReference type="HAMAP" id="MF_01049">
    <property type="entry name" value="CaiT"/>
    <property type="match status" value="1"/>
</dbReference>
<dbReference type="InterPro" id="IPR018093">
    <property type="entry name" value="BCCT_CS"/>
</dbReference>
<dbReference type="InterPro" id="IPR000060">
    <property type="entry name" value="BCCT_transptr"/>
</dbReference>
<dbReference type="InterPro" id="IPR023449">
    <property type="entry name" value="BCCT_transptr_CaiT"/>
</dbReference>
<dbReference type="NCBIfam" id="TIGR00842">
    <property type="entry name" value="bcct"/>
    <property type="match status" value="1"/>
</dbReference>
<dbReference type="NCBIfam" id="NF002887">
    <property type="entry name" value="PRK03356.1"/>
    <property type="match status" value="1"/>
</dbReference>
<dbReference type="PANTHER" id="PTHR30047">
    <property type="entry name" value="HIGH-AFFINITY CHOLINE TRANSPORT PROTEIN-RELATED"/>
    <property type="match status" value="1"/>
</dbReference>
<dbReference type="PANTHER" id="PTHR30047:SF11">
    <property type="entry name" value="L-CARNITINE_GAMMA-BUTYROBETAINE ANTIPORTER"/>
    <property type="match status" value="1"/>
</dbReference>
<dbReference type="Pfam" id="PF02028">
    <property type="entry name" value="BCCT"/>
    <property type="match status" value="1"/>
</dbReference>
<dbReference type="PROSITE" id="PS01303">
    <property type="entry name" value="BCCT"/>
    <property type="match status" value="1"/>
</dbReference>
<sequence length="504" mass="56587">MKNEKRKTGIEPKVFFPPLIIVGILCWLTVRDLDAANVVINAVFSYVTNVWGWAFEWYMVVMLFGWFWLVFGPYAKKRLGNEPPEFSTASWIFMMFASCTSAAVLFWGSIEIYYYISTPPFGLEPNSTGAKELGLAYSLFHWGPLPWATYSFLSVAFAYFFFVRKMEVIRPSSTLVPLVGEKHAKGLFGTIVDNFYLVALIFAMGTSLGLATPLVTECMQWLFGIPHTLQLDAIIITCWIILNAICVACGLQKGVRIASDVRSYLSFLMLGWVFIVSGASFIMNYFTDSVGMLLMYLPRMLFYTDPIAKGGFPQGWTVFYWAWWVIYAIQMSIFLARISRGRTVRELCFGMVLGLTASTWILWTVLGSNTLLLIDKNIINIPNLIEQYGVARAIIETWAALPLSTATMWGFFILCFIATVTLVNACSYTLAMSTCREVRDGEEPPLLVRIGWSILVGIIGIVLLALGGLKPIQTAIIAGGCPLFFVNIMVTLSFIKDAKQNWKD</sequence>
<organism>
    <name type="scientific">Escherichia coli O139:H28 (strain E24377A / ETEC)</name>
    <dbReference type="NCBI Taxonomy" id="331111"/>
    <lineage>
        <taxon>Bacteria</taxon>
        <taxon>Pseudomonadati</taxon>
        <taxon>Pseudomonadota</taxon>
        <taxon>Gammaproteobacteria</taxon>
        <taxon>Enterobacterales</taxon>
        <taxon>Enterobacteriaceae</taxon>
        <taxon>Escherichia</taxon>
    </lineage>
</organism>